<gene>
    <name evidence="1" type="primary">rpmH</name>
    <name type="ordered locus">DSY5060</name>
</gene>
<organism>
    <name type="scientific">Desulfitobacterium hafniense (strain Y51)</name>
    <dbReference type="NCBI Taxonomy" id="138119"/>
    <lineage>
        <taxon>Bacteria</taxon>
        <taxon>Bacillati</taxon>
        <taxon>Bacillota</taxon>
        <taxon>Clostridia</taxon>
        <taxon>Eubacteriales</taxon>
        <taxon>Desulfitobacteriaceae</taxon>
        <taxon>Desulfitobacterium</taxon>
    </lineage>
</organism>
<accession>Q24M93</accession>
<name>RL34_DESHY</name>
<protein>
    <recommendedName>
        <fullName evidence="1">Large ribosomal subunit protein bL34</fullName>
    </recommendedName>
    <alternativeName>
        <fullName evidence="3">50S ribosomal protein L34</fullName>
    </alternativeName>
</protein>
<feature type="chain" id="PRO_1000013331" description="Large ribosomal subunit protein bL34">
    <location>
        <begin position="1"/>
        <end position="44"/>
    </location>
</feature>
<feature type="region of interest" description="Disordered" evidence="2">
    <location>
        <begin position="1"/>
        <end position="44"/>
    </location>
</feature>
<feature type="compositionally biased region" description="Basic residues" evidence="2">
    <location>
        <begin position="1"/>
        <end position="16"/>
    </location>
</feature>
<feature type="compositionally biased region" description="Basic residues" evidence="2">
    <location>
        <begin position="30"/>
        <end position="44"/>
    </location>
</feature>
<proteinExistence type="inferred from homology"/>
<evidence type="ECO:0000255" key="1">
    <source>
        <dbReference type="HAMAP-Rule" id="MF_00391"/>
    </source>
</evidence>
<evidence type="ECO:0000256" key="2">
    <source>
        <dbReference type="SAM" id="MobiDB-lite"/>
    </source>
</evidence>
<evidence type="ECO:0000305" key="3"/>
<dbReference type="EMBL" id="AP008230">
    <property type="protein sequence ID" value="BAE86849.1"/>
    <property type="molecule type" value="Genomic_DNA"/>
</dbReference>
<dbReference type="RefSeq" id="WP_011462335.1">
    <property type="nucleotide sequence ID" value="NC_007907.1"/>
</dbReference>
<dbReference type="SMR" id="Q24M93"/>
<dbReference type="STRING" id="138119.DSY5060"/>
<dbReference type="KEGG" id="dsy:DSY5060"/>
<dbReference type="eggNOG" id="COG0230">
    <property type="taxonomic scope" value="Bacteria"/>
</dbReference>
<dbReference type="HOGENOM" id="CLU_129938_2_0_9"/>
<dbReference type="Proteomes" id="UP000001946">
    <property type="component" value="Chromosome"/>
</dbReference>
<dbReference type="GO" id="GO:1990904">
    <property type="term" value="C:ribonucleoprotein complex"/>
    <property type="evidence" value="ECO:0007669"/>
    <property type="project" value="UniProtKB-KW"/>
</dbReference>
<dbReference type="GO" id="GO:0005840">
    <property type="term" value="C:ribosome"/>
    <property type="evidence" value="ECO:0007669"/>
    <property type="project" value="UniProtKB-KW"/>
</dbReference>
<dbReference type="GO" id="GO:0003735">
    <property type="term" value="F:structural constituent of ribosome"/>
    <property type="evidence" value="ECO:0007669"/>
    <property type="project" value="InterPro"/>
</dbReference>
<dbReference type="GO" id="GO:0006412">
    <property type="term" value="P:translation"/>
    <property type="evidence" value="ECO:0007669"/>
    <property type="project" value="UniProtKB-UniRule"/>
</dbReference>
<dbReference type="FunFam" id="1.10.287.3980:FF:000001">
    <property type="entry name" value="Mitochondrial ribosomal protein L34"/>
    <property type="match status" value="1"/>
</dbReference>
<dbReference type="Gene3D" id="1.10.287.3980">
    <property type="match status" value="1"/>
</dbReference>
<dbReference type="HAMAP" id="MF_00391">
    <property type="entry name" value="Ribosomal_bL34"/>
    <property type="match status" value="1"/>
</dbReference>
<dbReference type="InterPro" id="IPR000271">
    <property type="entry name" value="Ribosomal_bL34"/>
</dbReference>
<dbReference type="InterPro" id="IPR020939">
    <property type="entry name" value="Ribosomal_bL34_CS"/>
</dbReference>
<dbReference type="NCBIfam" id="TIGR01030">
    <property type="entry name" value="rpmH_bact"/>
    <property type="match status" value="1"/>
</dbReference>
<dbReference type="PANTHER" id="PTHR14503:SF4">
    <property type="entry name" value="LARGE RIBOSOMAL SUBUNIT PROTEIN BL34M"/>
    <property type="match status" value="1"/>
</dbReference>
<dbReference type="PANTHER" id="PTHR14503">
    <property type="entry name" value="MITOCHONDRIAL RIBOSOMAL PROTEIN 34 FAMILY MEMBER"/>
    <property type="match status" value="1"/>
</dbReference>
<dbReference type="Pfam" id="PF00468">
    <property type="entry name" value="Ribosomal_L34"/>
    <property type="match status" value="1"/>
</dbReference>
<dbReference type="PROSITE" id="PS00784">
    <property type="entry name" value="RIBOSOMAL_L34"/>
    <property type="match status" value="1"/>
</dbReference>
<keyword id="KW-1185">Reference proteome</keyword>
<keyword id="KW-0687">Ribonucleoprotein</keyword>
<keyword id="KW-0689">Ribosomal protein</keyword>
<reference key="1">
    <citation type="journal article" date="2006" name="J. Bacteriol.">
        <title>Complete genome sequence of the dehalorespiring bacterium Desulfitobacterium hafniense Y51 and comparison with Dehalococcoides ethenogenes 195.</title>
        <authorList>
            <person name="Nonaka H."/>
            <person name="Keresztes G."/>
            <person name="Shinoda Y."/>
            <person name="Ikenaga Y."/>
            <person name="Abe M."/>
            <person name="Naito K."/>
            <person name="Inatomi K."/>
            <person name="Furukawa K."/>
            <person name="Inui M."/>
            <person name="Yukawa H."/>
        </authorList>
    </citation>
    <scope>NUCLEOTIDE SEQUENCE [LARGE SCALE GENOMIC DNA]</scope>
    <source>
        <strain>Y51</strain>
    </source>
</reference>
<comment type="similarity">
    <text evidence="1">Belongs to the bacterial ribosomal protein bL34 family.</text>
</comment>
<sequence length="44" mass="5350">MKRTYQPKNRRHKRVHGFLERMSSTSGRNVLKRRRLKGRKKLSA</sequence>